<reference key="1">
    <citation type="journal article" date="2005" name="Nat. Biotechnol.">
        <title>The complete genome sequence of the meat-borne lactic acid bacterium Lactobacillus sakei 23K.</title>
        <authorList>
            <person name="Chaillou S."/>
            <person name="Champomier-Verges M.-C."/>
            <person name="Cornet M."/>
            <person name="Crutz-Le Coq A.-M."/>
            <person name="Dudez A.-M."/>
            <person name="Martin V."/>
            <person name="Beaufils S."/>
            <person name="Darbon-Rongere E."/>
            <person name="Bossy R."/>
            <person name="Loux V."/>
            <person name="Zagorec M."/>
        </authorList>
    </citation>
    <scope>NUCLEOTIDE SEQUENCE [LARGE SCALE GENOMIC DNA]</scope>
    <source>
        <strain>23K</strain>
    </source>
</reference>
<comment type="function">
    <text evidence="1">Catalyzes the phosphorylation of the hydroxyl group of 4-methyl-5-beta-hydroxyethylthiazole (THZ).</text>
</comment>
<comment type="catalytic activity">
    <reaction evidence="1">
        <text>5-(2-hydroxyethyl)-4-methylthiazole + ATP = 4-methyl-5-(2-phosphooxyethyl)-thiazole + ADP + H(+)</text>
        <dbReference type="Rhea" id="RHEA:24212"/>
        <dbReference type="ChEBI" id="CHEBI:15378"/>
        <dbReference type="ChEBI" id="CHEBI:17957"/>
        <dbReference type="ChEBI" id="CHEBI:30616"/>
        <dbReference type="ChEBI" id="CHEBI:58296"/>
        <dbReference type="ChEBI" id="CHEBI:456216"/>
        <dbReference type="EC" id="2.7.1.50"/>
    </reaction>
</comment>
<comment type="cofactor">
    <cofactor evidence="1">
        <name>Mg(2+)</name>
        <dbReference type="ChEBI" id="CHEBI:18420"/>
    </cofactor>
</comment>
<comment type="pathway">
    <text evidence="1">Cofactor biosynthesis; thiamine diphosphate biosynthesis; 4-methyl-5-(2-phosphoethyl)-thiazole from 5-(2-hydroxyethyl)-4-methylthiazole: step 1/1.</text>
</comment>
<comment type="similarity">
    <text evidence="1">Belongs to the Thz kinase family.</text>
</comment>
<accession>Q38ZL9</accession>
<feature type="chain" id="PRO_1000021515" description="Hydroxyethylthiazole kinase">
    <location>
        <begin position="1"/>
        <end position="269"/>
    </location>
</feature>
<feature type="binding site" evidence="1">
    <location>
        <position position="41"/>
    </location>
    <ligand>
        <name>substrate</name>
    </ligand>
</feature>
<feature type="binding site" evidence="1">
    <location>
        <position position="117"/>
    </location>
    <ligand>
        <name>ATP</name>
        <dbReference type="ChEBI" id="CHEBI:30616"/>
    </ligand>
</feature>
<feature type="binding site" evidence="1">
    <location>
        <position position="163"/>
    </location>
    <ligand>
        <name>ATP</name>
        <dbReference type="ChEBI" id="CHEBI:30616"/>
    </ligand>
</feature>
<feature type="binding site" evidence="1">
    <location>
        <position position="190"/>
    </location>
    <ligand>
        <name>substrate</name>
    </ligand>
</feature>
<name>THIM_LATSS</name>
<sequence length="269" mass="28312">MSKTLLDQIKQANPIITNVANSVTVDQVANVQNIIGASPIMSSDPEEAPEMVAIAQALSINIGTLSTEPIHQMKTLMAEAYRQAKPVVIDPVAVSSIHYRQKIIDELLALGTPQIIRGNAGEIAYLAGLDWQANGIDAGSGEIDLVKVAQTAAKKQQTTILLSGPTDIITDGHHTTKVANGTPLFQVHVGSGDMLTGLCAAFVAVSPDNPYQAAIDAATTFAVAGQLVAEAMPTPLPGSFYPQLLDCLFNITAADVQTHAQVTEVLTHE</sequence>
<proteinExistence type="inferred from homology"/>
<evidence type="ECO:0000255" key="1">
    <source>
        <dbReference type="HAMAP-Rule" id="MF_00228"/>
    </source>
</evidence>
<gene>
    <name evidence="1" type="primary">thiM</name>
    <name type="ordered locus">LCA_0059</name>
</gene>
<protein>
    <recommendedName>
        <fullName evidence="1">Hydroxyethylthiazole kinase</fullName>
        <ecNumber evidence="1">2.7.1.50</ecNumber>
    </recommendedName>
    <alternativeName>
        <fullName evidence="1">4-methyl-5-beta-hydroxyethylthiazole kinase</fullName>
        <shortName evidence="1">TH kinase</shortName>
        <shortName evidence="1">Thz kinase</shortName>
    </alternativeName>
</protein>
<keyword id="KW-0067">ATP-binding</keyword>
<keyword id="KW-0418">Kinase</keyword>
<keyword id="KW-0460">Magnesium</keyword>
<keyword id="KW-0479">Metal-binding</keyword>
<keyword id="KW-0547">Nucleotide-binding</keyword>
<keyword id="KW-1185">Reference proteome</keyword>
<keyword id="KW-0784">Thiamine biosynthesis</keyword>
<keyword id="KW-0808">Transferase</keyword>
<dbReference type="EC" id="2.7.1.50" evidence="1"/>
<dbReference type="EMBL" id="CR936503">
    <property type="protein sequence ID" value="CAI54358.1"/>
    <property type="molecule type" value="Genomic_DNA"/>
</dbReference>
<dbReference type="RefSeq" id="WP_011373773.1">
    <property type="nucleotide sequence ID" value="NC_007576.1"/>
</dbReference>
<dbReference type="SMR" id="Q38ZL9"/>
<dbReference type="STRING" id="314315.LCA_0059"/>
<dbReference type="KEGG" id="lsa:LCA_0059"/>
<dbReference type="eggNOG" id="COG2145">
    <property type="taxonomic scope" value="Bacteria"/>
</dbReference>
<dbReference type="HOGENOM" id="CLU_019943_0_1_9"/>
<dbReference type="OrthoDB" id="9778146at2"/>
<dbReference type="UniPathway" id="UPA00060">
    <property type="reaction ID" value="UER00139"/>
</dbReference>
<dbReference type="Proteomes" id="UP000002707">
    <property type="component" value="Chromosome"/>
</dbReference>
<dbReference type="GO" id="GO:0005524">
    <property type="term" value="F:ATP binding"/>
    <property type="evidence" value="ECO:0007669"/>
    <property type="project" value="UniProtKB-UniRule"/>
</dbReference>
<dbReference type="GO" id="GO:0004417">
    <property type="term" value="F:hydroxyethylthiazole kinase activity"/>
    <property type="evidence" value="ECO:0007669"/>
    <property type="project" value="UniProtKB-UniRule"/>
</dbReference>
<dbReference type="GO" id="GO:0000287">
    <property type="term" value="F:magnesium ion binding"/>
    <property type="evidence" value="ECO:0007669"/>
    <property type="project" value="UniProtKB-UniRule"/>
</dbReference>
<dbReference type="GO" id="GO:0009228">
    <property type="term" value="P:thiamine biosynthetic process"/>
    <property type="evidence" value="ECO:0007669"/>
    <property type="project" value="UniProtKB-KW"/>
</dbReference>
<dbReference type="GO" id="GO:0009229">
    <property type="term" value="P:thiamine diphosphate biosynthetic process"/>
    <property type="evidence" value="ECO:0007669"/>
    <property type="project" value="UniProtKB-UniRule"/>
</dbReference>
<dbReference type="CDD" id="cd01170">
    <property type="entry name" value="THZ_kinase"/>
    <property type="match status" value="1"/>
</dbReference>
<dbReference type="Gene3D" id="3.40.1190.20">
    <property type="match status" value="1"/>
</dbReference>
<dbReference type="HAMAP" id="MF_00228">
    <property type="entry name" value="Thz_kinase"/>
    <property type="match status" value="1"/>
</dbReference>
<dbReference type="InterPro" id="IPR000417">
    <property type="entry name" value="Hyethyz_kinase"/>
</dbReference>
<dbReference type="InterPro" id="IPR029056">
    <property type="entry name" value="Ribokinase-like"/>
</dbReference>
<dbReference type="NCBIfam" id="NF006830">
    <property type="entry name" value="PRK09355.1"/>
    <property type="match status" value="1"/>
</dbReference>
<dbReference type="Pfam" id="PF02110">
    <property type="entry name" value="HK"/>
    <property type="match status" value="1"/>
</dbReference>
<dbReference type="PIRSF" id="PIRSF000513">
    <property type="entry name" value="Thz_kinase"/>
    <property type="match status" value="1"/>
</dbReference>
<dbReference type="PRINTS" id="PR01099">
    <property type="entry name" value="HYETHTZKNASE"/>
</dbReference>
<dbReference type="SUPFAM" id="SSF53613">
    <property type="entry name" value="Ribokinase-like"/>
    <property type="match status" value="1"/>
</dbReference>
<organism>
    <name type="scientific">Latilactobacillus sakei subsp. sakei (strain 23K)</name>
    <name type="common">Lactobacillus sakei subsp. sakei</name>
    <dbReference type="NCBI Taxonomy" id="314315"/>
    <lineage>
        <taxon>Bacteria</taxon>
        <taxon>Bacillati</taxon>
        <taxon>Bacillota</taxon>
        <taxon>Bacilli</taxon>
        <taxon>Lactobacillales</taxon>
        <taxon>Lactobacillaceae</taxon>
        <taxon>Latilactobacillus</taxon>
    </lineage>
</organism>